<proteinExistence type="evidence at protein level"/>
<comment type="function">
    <text evidence="4 5 6 7 10">Sequence-specific, DNA-binding protein required for Tn7 transposition (PubMed:10704304, PubMed:23674682, PubMed:35654042, PubMed:8947057). Recognizes sequences necessary for recombination at both left and right ends of Tn7 and, together with TnsA, forms the transposase (PubMed:8947057). TnsB executes the 3'-DNA strand breakage and joining reactions (PubMed:8947057). TnsB binding introduces DNA bending (PubMed:35654042). There are 3 DNA-binding sites in the left and 4 in the right end of Tn7; as TnsB levels increase more TnsB is bound, suggesting high protein levels contribute to transposon immunity (Probable) (PubMed:35654042). Binding of TnsB to the transposon right end represses expression of the downstream transposition genes (PubMed:35654042). TnsABC + TnsD promote high-frequency insertion of Tn7 into a specific target site known as att-Tn7 whereas TnsABC + TnsE promote low-frequency insertion into many different sites.</text>
</comment>
<comment type="subunit">
    <text evidence="5 7">Heteromer with TnsA (PubMed:23674682, PubMed:8947057).</text>
</comment>
<comment type="domain">
    <text evidence="6">Has 4 domains separated by linkers; DNA-binding domain 1 and 2 (DBD1 and DBD2), a catalytic domain (CD) and the C-terminus (not resolved in structure 7PIK) (PubMed:35654042). Binds 21 base pairs (bp) of double-stranded (ds)DNA; binds adjacent sites with a beads-on-a-string architecture making filaments. The CD of 1 subunit interacts with DBD1 of its own, the preceding and the following subunit (PubMed:35654042). Contacts dsDNA via DBD1, DBD2 and the linker between them (PubMed:35654042).</text>
</comment>
<dbReference type="EMBL" id="X17693">
    <property type="protein sequence ID" value="CAA35684.1"/>
    <property type="molecule type" value="Genomic_DNA"/>
</dbReference>
<dbReference type="EMBL" id="AP002527">
    <property type="protein sequence ID" value="BAB12612.1"/>
    <property type="molecule type" value="Genomic_DNA"/>
</dbReference>
<dbReference type="PIR" id="S12638">
    <property type="entry name" value="S12638"/>
</dbReference>
<dbReference type="RefSeq" id="NP_065319.1">
    <property type="nucleotide sequence ID" value="NC_002525.1"/>
</dbReference>
<dbReference type="RefSeq" id="WP_000267723.1">
    <property type="nucleotide sequence ID" value="NZ_WWEV01000116.1"/>
</dbReference>
<dbReference type="PDB" id="7PIK">
    <property type="method" value="EM"/>
    <property type="resolution" value="2.68 A"/>
    <property type="chains" value="A/B/C/D/E=1-702"/>
</dbReference>
<dbReference type="PDBsum" id="7PIK"/>
<dbReference type="EMDB" id="EMD-13439"/>
<dbReference type="SMR" id="P13989"/>
<dbReference type="BRENDA" id="2.7.7.B22">
    <property type="organism ID" value="2026"/>
</dbReference>
<dbReference type="GO" id="GO:0005694">
    <property type="term" value="C:chromosome"/>
    <property type="evidence" value="ECO:0000314"/>
    <property type="project" value="UniProtKB"/>
</dbReference>
<dbReference type="GO" id="GO:0003677">
    <property type="term" value="F:DNA binding"/>
    <property type="evidence" value="ECO:0007669"/>
    <property type="project" value="UniProtKB-KW"/>
</dbReference>
<dbReference type="GO" id="GO:0004803">
    <property type="term" value="F:transposase activity"/>
    <property type="evidence" value="ECO:0000314"/>
    <property type="project" value="UniProtKB"/>
</dbReference>
<dbReference type="GO" id="GO:0015074">
    <property type="term" value="P:DNA integration"/>
    <property type="evidence" value="ECO:0007669"/>
    <property type="project" value="InterPro"/>
</dbReference>
<dbReference type="GO" id="GO:0006313">
    <property type="term" value="P:DNA transposition"/>
    <property type="evidence" value="ECO:0000314"/>
    <property type="project" value="UniProtKB"/>
</dbReference>
<dbReference type="Gene3D" id="3.30.420.10">
    <property type="entry name" value="Ribonuclease H-like superfamily/Ribonuclease H"/>
    <property type="match status" value="1"/>
</dbReference>
<dbReference type="InterPro" id="IPR001584">
    <property type="entry name" value="Integrase_cat-core"/>
</dbReference>
<dbReference type="InterPro" id="IPR012337">
    <property type="entry name" value="RNaseH-like_sf"/>
</dbReference>
<dbReference type="InterPro" id="IPR036397">
    <property type="entry name" value="RNaseH_sf"/>
</dbReference>
<dbReference type="SUPFAM" id="SSF53098">
    <property type="entry name" value="Ribonuclease H-like"/>
    <property type="match status" value="1"/>
</dbReference>
<dbReference type="PROSITE" id="PS50994">
    <property type="entry name" value="INTEGRASE"/>
    <property type="match status" value="1"/>
</dbReference>
<protein>
    <recommendedName>
        <fullName>Transposon Tn7 transposition protein TnsB</fullName>
    </recommendedName>
</protein>
<sequence length="702" mass="80825">MWQINEVVLFDNDPYRILAIEDGQVVWMQISADKGVPQARAELLLMQYLDEGRLVRTDDPYVHLDLEEPSVDSVSFQKREEDYRKILPIINSKDRFDPKVRSELVEHVVQEHKVTKATVYKLLRRYWQRGQTPNALIPDYKNSGAPGERRSATGTAKIGRAREYGKGEGTKVTPEIERLFRLTIEKHLLNQKGTKTTVAYRRFVDLFAQYFPRIPQEDYPTLRQFRYFYDREYPKAQRLKSRVKAGVYKKDVRPLSSTATSQALGPGSRYEIDATIADIYLVDHHDRQKIIGRPTLYIVIDVFSRMITGFYIGFENPSYVVAMQAFVNACSDKTAICAQHDIEISSSDWPCVGLPDVLLADRGELMSHQVEALVSSFNVRVESAPPRRGDAKGIVESTFRTLQAEFKSFAPGIVEGSRIKSHGETDYRLDASLSVFEFTQIILRTILFRNNHLVMDKYDRDADFPTDLPSIPVQLWQWGMQHRTGSLRAVEQEQLRVALLPRRKVSISSFGVNLWGLYYSGSEILREGWLQRSTDIARPQHLEAAYDPVLVDTIYLFPQVGSRVFWRCNLTERSRQFKGLSFWEVWDIQAQEKHNKANAKQDELTKRRELEAFIQQTIQKANKLTPSTTEPKSTRIKQIKTNKKEAVTSERKKRAEHLKPSSSGDEAKVIPFNAVEADDQEDYSLPTYVPELFQDPPEKDES</sequence>
<name>TNSB_ECOLX</name>
<evidence type="ECO:0000250" key="1"/>
<evidence type="ECO:0000255" key="2">
    <source>
        <dbReference type="PROSITE-ProRule" id="PRU00457"/>
    </source>
</evidence>
<evidence type="ECO:0000256" key="3">
    <source>
        <dbReference type="SAM" id="MobiDB-lite"/>
    </source>
</evidence>
<evidence type="ECO:0000269" key="4">
    <source>
    </source>
</evidence>
<evidence type="ECO:0000269" key="5">
    <source>
    </source>
</evidence>
<evidence type="ECO:0000269" key="6">
    <source>
    </source>
</evidence>
<evidence type="ECO:0000269" key="7">
    <source>
    </source>
</evidence>
<evidence type="ECO:0000303" key="8">
    <source>
    </source>
</evidence>
<evidence type="ECO:0000303" key="9">
    <source>
    </source>
</evidence>
<evidence type="ECO:0000305" key="10">
    <source>
    </source>
</evidence>
<evidence type="ECO:0007744" key="11">
    <source>
        <dbReference type="PDB" id="7PIK"/>
    </source>
</evidence>
<evidence type="ECO:0007829" key="12">
    <source>
        <dbReference type="PDB" id="7PIK"/>
    </source>
</evidence>
<geneLocation type="plasmid">
    <name>R721</name>
</geneLocation>
<feature type="chain" id="PRO_0000072612" description="Transposon Tn7 transposition protein TnsB">
    <location>
        <begin position="1"/>
        <end position="702"/>
    </location>
</feature>
<feature type="domain" description="Integrase catalytic" evidence="2">
    <location>
        <begin position="262"/>
        <end position="480"/>
    </location>
</feature>
<feature type="DNA-binding region" description="H-T-H motif" evidence="1">
    <location>
        <begin position="105"/>
        <end position="124"/>
    </location>
</feature>
<feature type="region of interest" description="DNA-binding domain 1 (DBD1)" evidence="6">
    <location>
        <begin position="1"/>
        <end position="139"/>
    </location>
</feature>
<feature type="region of interest" description="Disordered" evidence="3">
    <location>
        <begin position="137"/>
        <end position="160"/>
    </location>
</feature>
<feature type="region of interest" description="Linker 1" evidence="10">
    <location>
        <begin position="140"/>
        <end position="172"/>
    </location>
</feature>
<feature type="region of interest" description="DNA-binding domain 2 (DBD2)" evidence="6">
    <location>
        <begin position="173"/>
        <end position="233"/>
    </location>
</feature>
<feature type="region of interest" description="Linker 2" evidence="10">
    <location>
        <begin position="234"/>
        <end position="267"/>
    </location>
</feature>
<feature type="region of interest" description="Catalytic domain (CD)" evidence="6">
    <location>
        <begin position="268"/>
        <end position="582"/>
    </location>
</feature>
<feature type="region of interest" description="C-terminal domain" evidence="10">
    <location>
        <begin position="589"/>
        <end position="702"/>
    </location>
</feature>
<feature type="region of interest" description="Disordered" evidence="3">
    <location>
        <begin position="623"/>
        <end position="702"/>
    </location>
</feature>
<feature type="mutagenesis site" description="Binds dsDNA less well, 80% reduction in transposition efficiency." evidence="6">
    <original>L</original>
    <variation>W</variation>
    <location>
        <position position="43"/>
    </location>
</feature>
<feature type="mutagenesis site" description="Reduced DNA-binding, loss of transposition." evidence="6">
    <original>KVR</original>
    <variation>AVA</variation>
    <location>
        <begin position="99"/>
        <end position="101"/>
    </location>
</feature>
<feature type="mutagenesis site" description="Reduced DNA-binding, loss of transposition." evidence="6">
    <original>TKAT</original>
    <variation>AKAA</variation>
    <location>
        <begin position="115"/>
        <end position="118"/>
    </location>
</feature>
<feature type="mutagenesis site" description="Nearly wild-type DNA-binding, 50% transposition efficiency." evidence="6">
    <original>K</original>
    <variation>A</variation>
    <location>
        <position position="116"/>
    </location>
</feature>
<feature type="mutagenesis site" description="Reduced DNA-binding, loss of transposition." evidence="6">
    <original>YK</original>
    <variation>AA</variation>
    <location>
        <begin position="120"/>
        <end position="121"/>
    </location>
</feature>
<feature type="mutagenesis site" description="Reduced DNA-binding, loss of transposition." evidence="6">
    <original>RR</original>
    <variation>AA</variation>
    <location>
        <begin position="124"/>
        <end position="125"/>
    </location>
</feature>
<feature type="mutagenesis site" description="Binds dsDNA less well, 50% reduction in transposition efficiency." evidence="6">
    <original>P</original>
    <variation>W</variation>
    <location>
        <position position="133"/>
    </location>
</feature>
<feature type="mutagenesis site" description="Reduced DNA-binding, loss of transposition." evidence="6">
    <original>SGAPGERR</original>
    <variation>AGAPGERA</variation>
    <location>
        <begin position="143"/>
        <end position="150"/>
    </location>
</feature>
<feature type="mutagenesis site" description="Nearly wild-type DNA-binding, only 10% transposition efficiency." evidence="6">
    <original>K</original>
    <variation>A</variation>
    <location>
        <position position="157"/>
    </location>
</feature>
<feature type="mutagenesis site" description="Nearly wild-type DNA-binding, only 25% transposition efficiency." evidence="6">
    <original>R</original>
    <variation>A</variation>
    <location>
        <position position="160"/>
    </location>
</feature>
<feature type="mutagenesis site" description="Reduced DNA-binding, loss of transposition." evidence="6">
    <original>R</original>
    <variation>A</variation>
    <location>
        <position position="223"/>
    </location>
</feature>
<feature type="mutagenesis site" description="Reduced DNA-binding, loss of transposition." evidence="6">
    <original>QFR</original>
    <variation>AFA</variation>
    <location>
        <begin position="224"/>
        <end position="226"/>
    </location>
</feature>
<feature type="mutagenesis site" description="Reduced DNA-binding, loss of transposition." evidence="6">
    <original>YFYDR</original>
    <variation>AFYDA</variation>
    <location>
        <begin position="227"/>
        <end position="231"/>
    </location>
</feature>
<feature type="mutagenesis site" description="Still binds DNA and forms filaments (shortens linker 2)." evidence="6">
    <location>
        <begin position="245"/>
        <end position="251"/>
    </location>
</feature>
<feature type="mutagenesis site" description="Prevents DNA strand breakage and joining reactions." evidence="7">
    <original>D</original>
    <variation>N</variation>
    <location>
        <position position="273"/>
    </location>
</feature>
<feature type="mutagenesis site" description="No effect on recombination." evidence="7">
    <original>D</original>
    <variation>N</variation>
    <location>
        <position position="278"/>
    </location>
</feature>
<feature type="mutagenesis site" description="No effect on recombination." evidence="7">
    <original>D</original>
    <variation>N</variation>
    <location>
        <position position="283"/>
    </location>
</feature>
<feature type="mutagenesis site" description="Prevents DNA strand breakage and joining reactions." evidence="7">
    <original>D</original>
    <variation>A</variation>
    <location>
        <position position="301"/>
    </location>
</feature>
<feature type="mutagenesis site" description="No effect on recombination." evidence="7">
    <original>S</original>
    <variation>A</variation>
    <location>
        <position position="304"/>
    </location>
</feature>
<feature type="mutagenesis site" description="Prevents DNA strand breakage and joining reactions." evidence="7">
    <original>D</original>
    <variation>N</variation>
    <location>
        <position position="361"/>
    </location>
</feature>
<feature type="mutagenesis site" description="DNA strand single-end joining." evidence="7">
    <original>E</original>
    <variation>A</variation>
    <location>
        <position position="364"/>
    </location>
</feature>
<feature type="mutagenesis site" description="No effect on recombination." evidence="7">
    <original>E</original>
    <variation>A</variation>
    <location>
        <position position="371"/>
    </location>
</feature>
<feature type="mutagenesis site" description="Prevents DNA strand breakage and joining reactions." evidence="7">
    <original>E</original>
    <variation>Q</variation>
    <location>
        <position position="396"/>
    </location>
</feature>
<feature type="mutagenesis site" description="No effect on recombination." evidence="7">
    <original>E</original>
    <variation>A</variation>
    <location>
        <position position="424"/>
    </location>
</feature>
<feature type="mutagenesis site" description="Binds dsDNA less well, 75% reduction in transposition efficiency." evidence="6">
    <original>L</original>
    <variation>W</variation>
    <location>
        <position position="525"/>
    </location>
</feature>
<feature type="strand" evidence="12">
    <location>
        <begin position="7"/>
        <end position="12"/>
    </location>
</feature>
<feature type="strand" evidence="12">
    <location>
        <begin position="14"/>
        <end position="21"/>
    </location>
</feature>
<feature type="strand" evidence="12">
    <location>
        <begin position="24"/>
        <end position="33"/>
    </location>
</feature>
<feature type="strand" evidence="12">
    <location>
        <begin position="38"/>
        <end position="41"/>
    </location>
</feature>
<feature type="helix" evidence="12">
    <location>
        <begin position="42"/>
        <end position="50"/>
    </location>
</feature>
<feature type="strand" evidence="12">
    <location>
        <begin position="53"/>
        <end position="56"/>
    </location>
</feature>
<feature type="helix" evidence="12">
    <location>
        <begin position="62"/>
        <end position="64"/>
    </location>
</feature>
<feature type="helix" evidence="12">
    <location>
        <begin position="74"/>
        <end position="90"/>
    </location>
</feature>
<feature type="turn" evidence="12">
    <location>
        <begin position="93"/>
        <end position="96"/>
    </location>
</feature>
<feature type="helix" evidence="12">
    <location>
        <begin position="98"/>
        <end position="112"/>
    </location>
</feature>
<feature type="helix" evidence="12">
    <location>
        <begin position="116"/>
        <end position="128"/>
    </location>
</feature>
<feature type="helix" evidence="12">
    <location>
        <begin position="133"/>
        <end position="136"/>
    </location>
</feature>
<feature type="helix" evidence="12">
    <location>
        <begin position="140"/>
        <end position="142"/>
    </location>
</feature>
<feature type="strand" evidence="12">
    <location>
        <begin position="146"/>
        <end position="148"/>
    </location>
</feature>
<feature type="helix" evidence="12">
    <location>
        <begin position="174"/>
        <end position="187"/>
    </location>
</feature>
<feature type="turn" evidence="12">
    <location>
        <begin position="188"/>
        <end position="190"/>
    </location>
</feature>
<feature type="helix" evidence="12">
    <location>
        <begin position="196"/>
        <end position="210"/>
    </location>
</feature>
<feature type="strand" evidence="12">
    <location>
        <begin position="212"/>
        <end position="214"/>
    </location>
</feature>
<feature type="helix" evidence="12">
    <location>
        <begin position="216"/>
        <end position="218"/>
    </location>
</feature>
<feature type="helix" evidence="12">
    <location>
        <begin position="222"/>
        <end position="231"/>
    </location>
</feature>
<feature type="strand" evidence="12">
    <location>
        <begin position="268"/>
        <end position="277"/>
    </location>
</feature>
<feature type="strand" evidence="12">
    <location>
        <begin position="290"/>
        <end position="292"/>
    </location>
</feature>
<feature type="strand" evidence="12">
    <location>
        <begin position="295"/>
        <end position="301"/>
    </location>
</feature>
<feature type="turn" evidence="12">
    <location>
        <begin position="302"/>
        <end position="304"/>
    </location>
</feature>
<feature type="strand" evidence="12">
    <location>
        <begin position="307"/>
        <end position="316"/>
    </location>
</feature>
<feature type="helix" evidence="12">
    <location>
        <begin position="319"/>
        <end position="329"/>
    </location>
</feature>
<feature type="helix" evidence="12">
    <location>
        <begin position="334"/>
        <end position="339"/>
    </location>
</feature>
<feature type="turn" evidence="12">
    <location>
        <begin position="346"/>
        <end position="348"/>
    </location>
</feature>
<feature type="strand" evidence="12">
    <location>
        <begin position="356"/>
        <end position="360"/>
    </location>
</feature>
<feature type="helix" evidence="12">
    <location>
        <begin position="367"/>
        <end position="375"/>
    </location>
</feature>
<feature type="strand" evidence="12">
    <location>
        <begin position="380"/>
        <end position="382"/>
    </location>
</feature>
<feature type="helix" evidence="12">
    <location>
        <begin position="390"/>
        <end position="395"/>
    </location>
</feature>
<feature type="turn" evidence="12">
    <location>
        <begin position="396"/>
        <end position="398"/>
    </location>
</feature>
<feature type="helix" evidence="12">
    <location>
        <begin position="435"/>
        <end position="451"/>
    </location>
</feature>
<feature type="helix" evidence="12">
    <location>
        <begin position="472"/>
        <end position="482"/>
    </location>
</feature>
<feature type="helix" evidence="12">
    <location>
        <begin position="492"/>
        <end position="498"/>
    </location>
</feature>
<feature type="strand" evidence="12">
    <location>
        <begin position="502"/>
        <end position="504"/>
    </location>
</feature>
<feature type="strand" evidence="12">
    <location>
        <begin position="512"/>
        <end position="514"/>
    </location>
</feature>
<feature type="strand" evidence="12">
    <location>
        <begin position="517"/>
        <end position="520"/>
    </location>
</feature>
<feature type="helix" evidence="12">
    <location>
        <begin position="523"/>
        <end position="527"/>
    </location>
</feature>
<feature type="strand" evidence="12">
    <location>
        <begin position="543"/>
        <end position="545"/>
    </location>
</feature>
<feature type="strand" evidence="12">
    <location>
        <begin position="552"/>
        <end position="557"/>
    </location>
</feature>
<feature type="strand" evidence="12">
    <location>
        <begin position="566"/>
        <end position="570"/>
    </location>
</feature>
<feature type="helix" evidence="12">
    <location>
        <begin position="575"/>
        <end position="577"/>
    </location>
</feature>
<feature type="helix" evidence="12">
    <location>
        <begin position="582"/>
        <end position="595"/>
    </location>
</feature>
<feature type="helix" evidence="12">
    <location>
        <begin position="598"/>
        <end position="623"/>
    </location>
</feature>
<organism>
    <name type="scientific">Escherichia coli</name>
    <dbReference type="NCBI Taxonomy" id="562"/>
    <lineage>
        <taxon>Bacteria</taxon>
        <taxon>Pseudomonadati</taxon>
        <taxon>Pseudomonadota</taxon>
        <taxon>Gammaproteobacteria</taxon>
        <taxon>Enterobacterales</taxon>
        <taxon>Enterobacteriaceae</taxon>
        <taxon>Escherichia</taxon>
    </lineage>
</organism>
<keyword id="KW-0002">3D-structure</keyword>
<keyword id="KW-0903">Direct protein sequencing</keyword>
<keyword id="KW-0233">DNA recombination</keyword>
<keyword id="KW-0238">DNA-binding</keyword>
<keyword id="KW-0614">Plasmid</keyword>
<keyword id="KW-0814">Transposable element</keyword>
<keyword id="KW-0815">Transposition</keyword>
<reference key="1">
    <citation type="journal article" date="1990" name="Nucleic Acids Res.">
        <title>DNA sequence analysis of five genes; tnsA, B, C, D and E, required for Tn7 transposition.</title>
        <authorList>
            <person name="Flores C."/>
            <person name="Qadri M.I."/>
            <person name="Lichtenstein C."/>
        </authorList>
    </citation>
    <scope>NUCLEOTIDE SEQUENCE [GENOMIC DNA]</scope>
</reference>
<reference key="2">
    <citation type="submission" date="2000-06" db="EMBL/GenBank/DDBJ databases">
        <title>Organization and diversification of plasmid genomes: complete nucleotide sequence of the R721 genome.</title>
        <authorList>
            <person name="Sampei G."/>
            <person name="Motomura K."/>
            <person name="Masuda S."/>
            <person name="Yamaguchi T."/>
            <person name="Ando K."/>
            <person name="Oishi T."/>
            <person name="Furuya N."/>
            <person name="Komano T."/>
            <person name="Mizobuchi K."/>
        </authorList>
    </citation>
    <scope>NUCLEOTIDE SEQUENCE [GENOMIC DNA]</scope>
    <source>
        <plasmid>R721</plasmid>
    </source>
</reference>
<reference key="3">
    <citation type="journal article" date="1990" name="Gene">
        <title>Identification of transposition proteins encoded by the bacterial transposon Tn7.</title>
        <authorList>
            <person name="Orle K.A."/>
            <person name="Craig N.L."/>
        </authorList>
    </citation>
    <scope>NUCLEOTIDE SEQUENCE [GENOMIC DNA] OF 1-86</scope>
</reference>
<reference key="4">
    <citation type="journal article" date="1991" name="Gene">
        <authorList>
            <person name="Orle K.A."/>
            <person name="Craig N.L."/>
        </authorList>
    </citation>
    <scope>ERRATUM OF PUBMED:1655576</scope>
</reference>
<reference key="5">
    <citation type="journal article" date="1991" name="J. Biol. Chem.">
        <title>Purification of TnsB, a transposition protein that binds to the ends of Tn7.</title>
        <authorList>
            <person name="Arciszewska L.K."/>
            <person name="McKown R.L."/>
            <person name="Craig N.L."/>
        </authorList>
    </citation>
    <scope>PROTEIN SEQUENCE OF 1-12</scope>
</reference>
<reference key="6">
    <citation type="journal article" date="1996" name="EMBO J.">
        <title>The Tn7 transposase is a heteromeric complex in which DNA breakage and joining activities are distributed between different gene products.</title>
        <authorList>
            <person name="Sarnovsky R.J."/>
            <person name="May E.W."/>
            <person name="Craig N.L."/>
        </authorList>
    </citation>
    <scope>FUNCTION</scope>
    <scope>SUBUNIT</scope>
    <scope>MUTAGENESIS OF ASP-273; ASP-278; ASP-283; ASP-301; SER-304; ASP-361; GLU-364; GLU-371; GLU-396 AND GLU-424</scope>
</reference>
<reference key="7">
    <citation type="journal article" date="2000" name="J. Mol. Biol.">
        <title>A minimal system for Tn7 transposition: the transposon-encoded proteins TnsA and TnsB can execute DNA breakage and joining reactions that generate circularized Tn7 species.</title>
        <authorList>
            <person name="Biery M.C."/>
            <person name="Lopata M."/>
            <person name="Craig N.L."/>
        </authorList>
    </citation>
    <scope>FUNCTION</scope>
</reference>
<reference key="8">
    <citation type="journal article" date="2013" name="Proc. Natl. Acad. Sci. U.S.A.">
        <title>Direct interaction between the TnsA and TnsB subunits controls the heteromeric Tn7 transposase.</title>
        <authorList>
            <person name="Choi K.Y."/>
            <person name="Li Y."/>
            <person name="Sarnovsky R."/>
            <person name="Craig N.L."/>
        </authorList>
    </citation>
    <scope>FUNCTION</scope>
    <scope>SUBUNIT</scope>
</reference>
<reference evidence="11" key="9">
    <citation type="journal article" date="2022" name="Mol. Cell">
        <title>Structural basis of transposon end recognition explains central features of Tn7 transposition systems.</title>
        <authorList>
            <person name="Kaczmarska Z."/>
            <person name="Czarnocki-Cieciura M."/>
            <person name="Gorecka-Minakowska K.M."/>
            <person name="Wingo R.J."/>
            <person name="Jackiewicz J."/>
            <person name="Zajko W."/>
            <person name="Poznanski J.T."/>
            <person name="Rawski M."/>
            <person name="Grant T."/>
            <person name="Peters J.E."/>
            <person name="Nowotny M."/>
        </authorList>
    </citation>
    <scope>STRUCTURE BY ELECTRON MICROSCOPY (2.68 ANGSTROMS) IN COMPLEX WTIH DNA</scope>
    <scope>FUNCTION</scope>
    <scope>DOMAIN</scope>
    <scope>DNA-BINDING</scope>
    <scope>MUTAGENESIS OF LEU-43; 99-LYS--ARG-101; 115-THR--THR-118; LYS-116; 120-TYR-LYS-121; 124-ARG-ARG-125; PRO-133; 143-SER--ARG-150; LYS-157; ARG-160; ARG-223; 224-GLN--ARG-226; 227-TYR--ARG-231; 245-ALA--ASP-251 AND LEU-525</scope>
</reference>
<gene>
    <name evidence="8 9" type="primary">tnsB</name>
</gene>
<accession>P13989</accession>
<accession>Q9R5R8</accession>